<evidence type="ECO:0000255" key="1">
    <source>
        <dbReference type="HAMAP-Rule" id="MF_00686"/>
    </source>
</evidence>
<accession>A1TRM6</accession>
<feature type="chain" id="PRO_1000045008" description="Probable Fe(2+)-trafficking protein">
    <location>
        <begin position="1"/>
        <end position="90"/>
    </location>
</feature>
<keyword id="KW-0408">Iron</keyword>
<proteinExistence type="inferred from homology"/>
<organism>
    <name type="scientific">Paracidovorax citrulli (strain AAC00-1)</name>
    <name type="common">Acidovorax citrulli</name>
    <dbReference type="NCBI Taxonomy" id="397945"/>
    <lineage>
        <taxon>Bacteria</taxon>
        <taxon>Pseudomonadati</taxon>
        <taxon>Pseudomonadota</taxon>
        <taxon>Betaproteobacteria</taxon>
        <taxon>Burkholderiales</taxon>
        <taxon>Comamonadaceae</taxon>
        <taxon>Paracidovorax</taxon>
    </lineage>
</organism>
<gene>
    <name type="ordered locus">Aave_3047</name>
</gene>
<name>FETP_PARC0</name>
<sequence length="90" mass="9991">MARTVQCIKLGKEAEGLDFPPYPGELGKRIFENVSKEAWAGWLKHQTMLVNENRLNLADARARQYLARQMEQHFFGGGADAAAGYVPPSA</sequence>
<protein>
    <recommendedName>
        <fullName evidence="1">Probable Fe(2+)-trafficking protein</fullName>
    </recommendedName>
</protein>
<dbReference type="EMBL" id="CP000512">
    <property type="protein sequence ID" value="ABM33614.1"/>
    <property type="molecule type" value="Genomic_DNA"/>
</dbReference>
<dbReference type="RefSeq" id="WP_011796124.1">
    <property type="nucleotide sequence ID" value="NC_008752.1"/>
</dbReference>
<dbReference type="SMR" id="A1TRM6"/>
<dbReference type="STRING" id="397945.Aave_3047"/>
<dbReference type="GeneID" id="79792733"/>
<dbReference type="KEGG" id="aav:Aave_3047"/>
<dbReference type="eggNOG" id="COG2924">
    <property type="taxonomic scope" value="Bacteria"/>
</dbReference>
<dbReference type="HOGENOM" id="CLU_170994_0_0_4"/>
<dbReference type="OrthoDB" id="9804318at2"/>
<dbReference type="Proteomes" id="UP000002596">
    <property type="component" value="Chromosome"/>
</dbReference>
<dbReference type="GO" id="GO:0005829">
    <property type="term" value="C:cytosol"/>
    <property type="evidence" value="ECO:0007669"/>
    <property type="project" value="TreeGrafter"/>
</dbReference>
<dbReference type="GO" id="GO:0005506">
    <property type="term" value="F:iron ion binding"/>
    <property type="evidence" value="ECO:0007669"/>
    <property type="project" value="UniProtKB-UniRule"/>
</dbReference>
<dbReference type="GO" id="GO:0034599">
    <property type="term" value="P:cellular response to oxidative stress"/>
    <property type="evidence" value="ECO:0007669"/>
    <property type="project" value="TreeGrafter"/>
</dbReference>
<dbReference type="FunFam" id="1.10.3880.10:FF:000001">
    <property type="entry name" value="Probable Fe(2+)-trafficking protein"/>
    <property type="match status" value="1"/>
</dbReference>
<dbReference type="Gene3D" id="1.10.3880.10">
    <property type="entry name" value="Fe(II) trafficking protein YggX"/>
    <property type="match status" value="1"/>
</dbReference>
<dbReference type="HAMAP" id="MF_00686">
    <property type="entry name" value="Fe_traffic_YggX"/>
    <property type="match status" value="1"/>
</dbReference>
<dbReference type="InterPro" id="IPR007457">
    <property type="entry name" value="Fe_traffick_prot_YggX"/>
</dbReference>
<dbReference type="InterPro" id="IPR036766">
    <property type="entry name" value="Fe_traffick_prot_YggX_sf"/>
</dbReference>
<dbReference type="NCBIfam" id="NF003817">
    <property type="entry name" value="PRK05408.1"/>
    <property type="match status" value="1"/>
</dbReference>
<dbReference type="PANTHER" id="PTHR36965">
    <property type="entry name" value="FE(2+)-TRAFFICKING PROTEIN-RELATED"/>
    <property type="match status" value="1"/>
</dbReference>
<dbReference type="PANTHER" id="PTHR36965:SF1">
    <property type="entry name" value="FE(2+)-TRAFFICKING PROTEIN-RELATED"/>
    <property type="match status" value="1"/>
</dbReference>
<dbReference type="Pfam" id="PF04362">
    <property type="entry name" value="Iron_traffic"/>
    <property type="match status" value="1"/>
</dbReference>
<dbReference type="PIRSF" id="PIRSF029827">
    <property type="entry name" value="Fe_traffic_YggX"/>
    <property type="match status" value="1"/>
</dbReference>
<dbReference type="SUPFAM" id="SSF111148">
    <property type="entry name" value="YggX-like"/>
    <property type="match status" value="1"/>
</dbReference>
<reference key="1">
    <citation type="submission" date="2006-12" db="EMBL/GenBank/DDBJ databases">
        <title>Complete sequence of Acidovorax avenae subsp. citrulli AAC00-1.</title>
        <authorList>
            <person name="Copeland A."/>
            <person name="Lucas S."/>
            <person name="Lapidus A."/>
            <person name="Barry K."/>
            <person name="Detter J.C."/>
            <person name="Glavina del Rio T."/>
            <person name="Dalin E."/>
            <person name="Tice H."/>
            <person name="Pitluck S."/>
            <person name="Kiss H."/>
            <person name="Brettin T."/>
            <person name="Bruce D."/>
            <person name="Han C."/>
            <person name="Tapia R."/>
            <person name="Gilna P."/>
            <person name="Schmutz J."/>
            <person name="Larimer F."/>
            <person name="Land M."/>
            <person name="Hauser L."/>
            <person name="Kyrpides N."/>
            <person name="Kim E."/>
            <person name="Stahl D."/>
            <person name="Richardson P."/>
        </authorList>
    </citation>
    <scope>NUCLEOTIDE SEQUENCE [LARGE SCALE GENOMIC DNA]</scope>
    <source>
        <strain>AAC00-1</strain>
    </source>
</reference>
<comment type="function">
    <text evidence="1">Could be a mediator in iron transactions between iron acquisition and iron-requiring processes, such as synthesis and/or repair of Fe-S clusters in biosynthetic enzymes.</text>
</comment>
<comment type="similarity">
    <text evidence="1">Belongs to the Fe(2+)-trafficking protein family.</text>
</comment>